<name>OPGD_PSE14</name>
<sequence>MNRRNLLKASMALAAYGSVSASGLYAARALAAAADGEIEHFDFAELQAHAKKLAGKGYVSNKQVLPPVLADMTPLQFNAIRYDPNHSLWKDVHGQLDVHFFHVGMGFKTPVRMYSVDPQNKQAREVHFRHDLFNYESSGIDKNLVKGDLGFAGFKLFKAPEIAINDVVSFLGASYFRAVDSNKQYGLSARGLAIDSYAKRQEEFPDFTKFWFETPDKNATRFVVYALLDSPSATGAYRFDIDCQAGQVVMEIDAHINARTDIQQLGISPMTSMFSCGTHERRMCDTIHPQIHDSDRLSMWRGNGEWICRPLNNPAKPQFSAFADTDPKGFGLVQSDHEFSSYQDTVVWYSRRPSLWVEPITAWGEGEVSLLELPTTGETMDNIVVFWTPKTPVKAGDSMNYGYKLFWSPLPPVSTPLAQVHATRSGMGGFLEGWAPGEHYPKTWARRFAVDFNGGGLDRLPEGTGIEPIVTVTHGKVQDFNILVLPDIKGYRVTFDWVPDSDSVEPVEMRMFIRTGDRTLSETWMYQYFPPAPDRRKYP</sequence>
<feature type="signal peptide" description="Tat-type signal" evidence="1">
    <location>
        <begin position="1"/>
        <end position="29"/>
    </location>
</feature>
<feature type="chain" id="PRO_1000064548" description="Glucans biosynthesis protein D">
    <location>
        <begin position="30"/>
        <end position="539"/>
    </location>
</feature>
<organism>
    <name type="scientific">Pseudomonas savastanoi pv. phaseolicola (strain 1448A / Race 6)</name>
    <name type="common">Pseudomonas syringae pv. phaseolicola (strain 1448A / Race 6)</name>
    <dbReference type="NCBI Taxonomy" id="264730"/>
    <lineage>
        <taxon>Bacteria</taxon>
        <taxon>Pseudomonadati</taxon>
        <taxon>Pseudomonadota</taxon>
        <taxon>Gammaproteobacteria</taxon>
        <taxon>Pseudomonadales</taxon>
        <taxon>Pseudomonadaceae</taxon>
        <taxon>Pseudomonas</taxon>
    </lineage>
</organism>
<proteinExistence type="inferred from homology"/>
<evidence type="ECO:0000255" key="1">
    <source>
        <dbReference type="HAMAP-Rule" id="MF_01068"/>
    </source>
</evidence>
<reference key="1">
    <citation type="journal article" date="2005" name="J. Bacteriol.">
        <title>Whole-genome sequence analysis of Pseudomonas syringae pv. phaseolicola 1448A reveals divergence among pathovars in genes involved in virulence and transposition.</title>
        <authorList>
            <person name="Joardar V."/>
            <person name="Lindeberg M."/>
            <person name="Jackson R.W."/>
            <person name="Selengut J."/>
            <person name="Dodson R."/>
            <person name="Brinkac L.M."/>
            <person name="Daugherty S.C."/>
            <person name="DeBoy R.T."/>
            <person name="Durkin A.S."/>
            <person name="Gwinn Giglio M."/>
            <person name="Madupu R."/>
            <person name="Nelson W.C."/>
            <person name="Rosovitz M.J."/>
            <person name="Sullivan S.A."/>
            <person name="Crabtree J."/>
            <person name="Creasy T."/>
            <person name="Davidsen T.M."/>
            <person name="Haft D.H."/>
            <person name="Zafar N."/>
            <person name="Zhou L."/>
            <person name="Halpin R."/>
            <person name="Holley T."/>
            <person name="Khouri H.M."/>
            <person name="Feldblyum T.V."/>
            <person name="White O."/>
            <person name="Fraser C.M."/>
            <person name="Chatterjee A.K."/>
            <person name="Cartinhour S."/>
            <person name="Schneider D."/>
            <person name="Mansfield J.W."/>
            <person name="Collmer A."/>
            <person name="Buell R."/>
        </authorList>
    </citation>
    <scope>NUCLEOTIDE SEQUENCE [LARGE SCALE GENOMIC DNA]</scope>
    <source>
        <strain>1448A / Race 6</strain>
    </source>
</reference>
<gene>
    <name evidence="1" type="primary">opgD</name>
    <name type="ordered locus">PSPPH_5168</name>
</gene>
<keyword id="KW-0574">Periplasm</keyword>
<keyword id="KW-0732">Signal</keyword>
<protein>
    <recommendedName>
        <fullName evidence="1">Glucans biosynthesis protein D</fullName>
    </recommendedName>
</protein>
<accession>Q48BK0</accession>
<dbReference type="EMBL" id="CP000058">
    <property type="protein sequence ID" value="AAZ33266.1"/>
    <property type="molecule type" value="Genomic_DNA"/>
</dbReference>
<dbReference type="RefSeq" id="WP_004667163.1">
    <property type="nucleotide sequence ID" value="NC_005773.3"/>
</dbReference>
<dbReference type="SMR" id="Q48BK0"/>
<dbReference type="KEGG" id="psp:PSPPH_5168"/>
<dbReference type="eggNOG" id="COG3131">
    <property type="taxonomic scope" value="Bacteria"/>
</dbReference>
<dbReference type="HOGENOM" id="CLU_023403_2_0_6"/>
<dbReference type="UniPathway" id="UPA00637"/>
<dbReference type="Proteomes" id="UP000000551">
    <property type="component" value="Chromosome"/>
</dbReference>
<dbReference type="GO" id="GO:0030288">
    <property type="term" value="C:outer membrane-bounded periplasmic space"/>
    <property type="evidence" value="ECO:0007669"/>
    <property type="project" value="TreeGrafter"/>
</dbReference>
<dbReference type="GO" id="GO:0030246">
    <property type="term" value="F:carbohydrate binding"/>
    <property type="evidence" value="ECO:0007669"/>
    <property type="project" value="InterPro"/>
</dbReference>
<dbReference type="GO" id="GO:0003824">
    <property type="term" value="F:catalytic activity"/>
    <property type="evidence" value="ECO:0007669"/>
    <property type="project" value="InterPro"/>
</dbReference>
<dbReference type="GO" id="GO:0051274">
    <property type="term" value="P:beta-glucan biosynthetic process"/>
    <property type="evidence" value="ECO:0007669"/>
    <property type="project" value="TreeGrafter"/>
</dbReference>
<dbReference type="Gene3D" id="2.70.98.10">
    <property type="match status" value="1"/>
</dbReference>
<dbReference type="Gene3D" id="2.60.40.10">
    <property type="entry name" value="Immunoglobulins"/>
    <property type="match status" value="1"/>
</dbReference>
<dbReference type="HAMAP" id="MF_01068">
    <property type="entry name" value="MdoD_OpgD"/>
    <property type="match status" value="1"/>
</dbReference>
<dbReference type="InterPro" id="IPR011013">
    <property type="entry name" value="Gal_mutarotase_sf_dom"/>
</dbReference>
<dbReference type="InterPro" id="IPR014718">
    <property type="entry name" value="GH-type_carb-bd"/>
</dbReference>
<dbReference type="InterPro" id="IPR023724">
    <property type="entry name" value="Glucan_biosyn_MdoD"/>
</dbReference>
<dbReference type="InterPro" id="IPR014438">
    <property type="entry name" value="Glucan_biosyn_MdoG/MdoD"/>
</dbReference>
<dbReference type="InterPro" id="IPR007444">
    <property type="entry name" value="Glucan_biosyn_MdoG_C"/>
</dbReference>
<dbReference type="InterPro" id="IPR013783">
    <property type="entry name" value="Ig-like_fold"/>
</dbReference>
<dbReference type="InterPro" id="IPR014756">
    <property type="entry name" value="Ig_E-set"/>
</dbReference>
<dbReference type="InterPro" id="IPR006311">
    <property type="entry name" value="TAT_signal"/>
</dbReference>
<dbReference type="PANTHER" id="PTHR30504">
    <property type="entry name" value="GLUCANS BIOSYNTHESIS PROTEIN"/>
    <property type="match status" value="1"/>
</dbReference>
<dbReference type="PANTHER" id="PTHR30504:SF3">
    <property type="entry name" value="GLUCANS BIOSYNTHESIS PROTEIN D"/>
    <property type="match status" value="1"/>
</dbReference>
<dbReference type="Pfam" id="PF04349">
    <property type="entry name" value="MdoG"/>
    <property type="match status" value="1"/>
</dbReference>
<dbReference type="PIRSF" id="PIRSF006281">
    <property type="entry name" value="MdoG"/>
    <property type="match status" value="1"/>
</dbReference>
<dbReference type="SUPFAM" id="SSF81296">
    <property type="entry name" value="E set domains"/>
    <property type="match status" value="1"/>
</dbReference>
<dbReference type="SUPFAM" id="SSF74650">
    <property type="entry name" value="Galactose mutarotase-like"/>
    <property type="match status" value="1"/>
</dbReference>
<dbReference type="PROSITE" id="PS51318">
    <property type="entry name" value="TAT"/>
    <property type="match status" value="1"/>
</dbReference>
<comment type="function">
    <text evidence="1">Probably involved in the control of the structural glucose backbone of osmoregulated periplasmic glucans (OPGs).</text>
</comment>
<comment type="pathway">
    <text evidence="1">Glycan metabolism; osmoregulated periplasmic glucan (OPG) biosynthesis.</text>
</comment>
<comment type="subcellular location">
    <subcellularLocation>
        <location evidence="1">Periplasm</location>
    </subcellularLocation>
</comment>
<comment type="PTM">
    <text>Predicted to be exported by the Tat system. The position of the signal peptide cleavage has not been experimentally proven.</text>
</comment>
<comment type="similarity">
    <text evidence="1">Belongs to the OpgD/OpgG family.</text>
</comment>